<comment type="subcellular location">
    <subcellularLocation>
        <location evidence="4">Secreted</location>
    </subcellularLocation>
</comment>
<comment type="mass spectrometry"/>
<comment type="similarity">
    <text evidence="1">Belongs to the FARP (FMRFamide related peptide) family.</text>
</comment>
<keyword id="KW-0027">Amidation</keyword>
<keyword id="KW-0903">Direct protein sequencing</keyword>
<keyword id="KW-0527">Neuropeptide</keyword>
<keyword id="KW-0964">Secreted</keyword>
<dbReference type="GO" id="GO:0005576">
    <property type="term" value="C:extracellular region"/>
    <property type="evidence" value="ECO:0007669"/>
    <property type="project" value="UniProtKB-SubCell"/>
</dbReference>
<dbReference type="GO" id="GO:0007218">
    <property type="term" value="P:neuropeptide signaling pathway"/>
    <property type="evidence" value="ECO:0007669"/>
    <property type="project" value="UniProtKB-KW"/>
</dbReference>
<organism>
    <name type="scientific">Sarcophaga bullata</name>
    <name type="common">Grey flesh fly</name>
    <name type="synonym">Neobellieria bullata</name>
    <dbReference type="NCBI Taxonomy" id="7385"/>
    <lineage>
        <taxon>Eukaryota</taxon>
        <taxon>Metazoa</taxon>
        <taxon>Ecdysozoa</taxon>
        <taxon>Arthropoda</taxon>
        <taxon>Hexapoda</taxon>
        <taxon>Insecta</taxon>
        <taxon>Pterygota</taxon>
        <taxon>Neoptera</taxon>
        <taxon>Endopterygota</taxon>
        <taxon>Diptera</taxon>
        <taxon>Brachycera</taxon>
        <taxon>Muscomorpha</taxon>
        <taxon>Oestroidea</taxon>
        <taxon>Sarcophagidae</taxon>
        <taxon>Sarcophaga</taxon>
        <taxon>Neobellieria</taxon>
    </lineage>
</organism>
<feature type="peptide" id="PRO_0000371761" description="FMRFamide-2">
    <location>
        <begin position="1"/>
        <end position="9"/>
    </location>
</feature>
<feature type="modified residue" description="Phenylalanine amide" evidence="2">
    <location>
        <position position="9"/>
    </location>
</feature>
<accession>P85475</accession>
<reference evidence="4" key="1">
    <citation type="journal article" date="2009" name="Gen. Comp. Endocrinol.">
        <title>Extended FMRFamides in dipteran insects: conservative expression in the neuroendocrine system is accompanied by rapid sequence evolution.</title>
        <authorList>
            <person name="Rahman M.M."/>
            <person name="Fromm B."/>
            <person name="Neupert S."/>
            <person name="Kreusch S."/>
            <person name="Predel R."/>
        </authorList>
    </citation>
    <scope>PROTEIN SEQUENCE</scope>
    <scope>MASS SPECTROMETRY</scope>
    <scope>AMIDATION AT PHE-9</scope>
    <source>
        <tissue evidence="2">Thoracic ganglionic sheath</tissue>
    </source>
</reference>
<protein>
    <recommendedName>
        <fullName>FMRFamide-2</fullName>
    </recommendedName>
    <alternativeName>
        <fullName evidence="3">SabFMRFamide-2</fullName>
    </alternativeName>
</protein>
<name>FAR2_SARBU</name>
<evidence type="ECO:0000255" key="1"/>
<evidence type="ECO:0000269" key="2">
    <source>
    </source>
</evidence>
<evidence type="ECO:0000303" key="3">
    <source>
    </source>
</evidence>
<evidence type="ECO:0000305" key="4"/>
<proteinExistence type="evidence at protein level"/>
<sequence>TPSQDFMRF</sequence>